<comment type="function">
    <text evidence="1">Transfers the 4'-phosphopantetheine moiety from coenzyme A to a Ser of acyl-carrier-protein.</text>
</comment>
<comment type="catalytic activity">
    <reaction evidence="1">
        <text>apo-[ACP] + CoA = holo-[ACP] + adenosine 3',5'-bisphosphate + H(+)</text>
        <dbReference type="Rhea" id="RHEA:12068"/>
        <dbReference type="Rhea" id="RHEA-COMP:9685"/>
        <dbReference type="Rhea" id="RHEA-COMP:9690"/>
        <dbReference type="ChEBI" id="CHEBI:15378"/>
        <dbReference type="ChEBI" id="CHEBI:29999"/>
        <dbReference type="ChEBI" id="CHEBI:57287"/>
        <dbReference type="ChEBI" id="CHEBI:58343"/>
        <dbReference type="ChEBI" id="CHEBI:64479"/>
        <dbReference type="EC" id="2.7.8.7"/>
    </reaction>
</comment>
<comment type="cofactor">
    <cofactor evidence="1">
        <name>Mg(2+)</name>
        <dbReference type="ChEBI" id="CHEBI:18420"/>
    </cofactor>
</comment>
<comment type="subcellular location">
    <subcellularLocation>
        <location evidence="1">Cytoplasm</location>
    </subcellularLocation>
</comment>
<comment type="similarity">
    <text evidence="1">Belongs to the P-Pant transferase superfamily. AcpS family.</text>
</comment>
<keyword id="KW-0963">Cytoplasm</keyword>
<keyword id="KW-0275">Fatty acid biosynthesis</keyword>
<keyword id="KW-0276">Fatty acid metabolism</keyword>
<keyword id="KW-0444">Lipid biosynthesis</keyword>
<keyword id="KW-0443">Lipid metabolism</keyword>
<keyword id="KW-0460">Magnesium</keyword>
<keyword id="KW-0479">Metal-binding</keyword>
<keyword id="KW-0808">Transferase</keyword>
<organism>
    <name type="scientific">Chlamydia pneumoniae</name>
    <name type="common">Chlamydophila pneumoniae</name>
    <dbReference type="NCBI Taxonomy" id="83558"/>
    <lineage>
        <taxon>Bacteria</taxon>
        <taxon>Pseudomonadati</taxon>
        <taxon>Chlamydiota</taxon>
        <taxon>Chlamydiia</taxon>
        <taxon>Chlamydiales</taxon>
        <taxon>Chlamydiaceae</taxon>
        <taxon>Chlamydia/Chlamydophila group</taxon>
        <taxon>Chlamydia</taxon>
    </lineage>
</organism>
<evidence type="ECO:0000255" key="1">
    <source>
        <dbReference type="HAMAP-Rule" id="MF_00101"/>
    </source>
</evidence>
<gene>
    <name evidence="1" type="primary">acpS</name>
    <name type="ordered locus">CPn_0313</name>
    <name type="ordered locus">CP_0445</name>
    <name type="ordered locus">CpB0323</name>
</gene>
<reference key="1">
    <citation type="journal article" date="1999" name="Nat. Genet.">
        <title>Comparative genomes of Chlamydia pneumoniae and C. trachomatis.</title>
        <authorList>
            <person name="Kalman S."/>
            <person name="Mitchell W.P."/>
            <person name="Marathe R."/>
            <person name="Lammel C.J."/>
            <person name="Fan J."/>
            <person name="Hyman R.W."/>
            <person name="Olinger L."/>
            <person name="Grimwood J."/>
            <person name="Davis R.W."/>
            <person name="Stephens R.S."/>
        </authorList>
    </citation>
    <scope>NUCLEOTIDE SEQUENCE [LARGE SCALE GENOMIC DNA]</scope>
    <source>
        <strain>CWL029</strain>
    </source>
</reference>
<reference key="2">
    <citation type="journal article" date="2000" name="Nucleic Acids Res.">
        <title>Genome sequences of Chlamydia trachomatis MoPn and Chlamydia pneumoniae AR39.</title>
        <authorList>
            <person name="Read T.D."/>
            <person name="Brunham R.C."/>
            <person name="Shen C."/>
            <person name="Gill S.R."/>
            <person name="Heidelberg J.F."/>
            <person name="White O."/>
            <person name="Hickey E.K."/>
            <person name="Peterson J.D."/>
            <person name="Utterback T.R."/>
            <person name="Berry K.J."/>
            <person name="Bass S."/>
            <person name="Linher K.D."/>
            <person name="Weidman J.F."/>
            <person name="Khouri H.M."/>
            <person name="Craven B."/>
            <person name="Bowman C."/>
            <person name="Dodson R.J."/>
            <person name="Gwinn M.L."/>
            <person name="Nelson W.C."/>
            <person name="DeBoy R.T."/>
            <person name="Kolonay J.F."/>
            <person name="McClarty G."/>
            <person name="Salzberg S.L."/>
            <person name="Eisen J.A."/>
            <person name="Fraser C.M."/>
        </authorList>
    </citation>
    <scope>NUCLEOTIDE SEQUENCE [LARGE SCALE GENOMIC DNA]</scope>
    <source>
        <strain>AR39</strain>
    </source>
</reference>
<reference key="3">
    <citation type="journal article" date="2000" name="Nucleic Acids Res.">
        <title>Comparison of whole genome sequences of Chlamydia pneumoniae J138 from Japan and CWL029 from USA.</title>
        <authorList>
            <person name="Shirai M."/>
            <person name="Hirakawa H."/>
            <person name="Kimoto M."/>
            <person name="Tabuchi M."/>
            <person name="Kishi F."/>
            <person name="Ouchi K."/>
            <person name="Shiba T."/>
            <person name="Ishii K."/>
            <person name="Hattori M."/>
            <person name="Kuhara S."/>
            <person name="Nakazawa T."/>
        </authorList>
    </citation>
    <scope>NUCLEOTIDE SEQUENCE [LARGE SCALE GENOMIC DNA]</scope>
    <source>
        <strain>J138</strain>
    </source>
</reference>
<reference key="4">
    <citation type="submission" date="2002-05" db="EMBL/GenBank/DDBJ databases">
        <title>The genome sequence of Chlamydia pneumoniae TW183 and comparison with other Chlamydia strains based on whole genome sequence analysis.</title>
        <authorList>
            <person name="Geng M.M."/>
            <person name="Schuhmacher A."/>
            <person name="Muehldorfer I."/>
            <person name="Bensch K.W."/>
            <person name="Schaefer K.P."/>
            <person name="Schneider S."/>
            <person name="Pohl T."/>
            <person name="Essig A."/>
            <person name="Marre R."/>
            <person name="Melchers K."/>
        </authorList>
    </citation>
    <scope>NUCLEOTIDE SEQUENCE [LARGE SCALE GENOMIC DNA]</scope>
    <source>
        <strain>TW-183</strain>
    </source>
</reference>
<dbReference type="EC" id="2.7.8.7" evidence="1"/>
<dbReference type="EMBL" id="AE001363">
    <property type="protein sequence ID" value="AAD18462.1"/>
    <property type="molecule type" value="Genomic_DNA"/>
</dbReference>
<dbReference type="EMBL" id="AE002161">
    <property type="protein sequence ID" value="AAF73670.1"/>
    <property type="molecule type" value="Genomic_DNA"/>
</dbReference>
<dbReference type="EMBL" id="BA000008">
    <property type="protein sequence ID" value="BAA98523.1"/>
    <property type="molecule type" value="Genomic_DNA"/>
</dbReference>
<dbReference type="EMBL" id="AE009440">
    <property type="protein sequence ID" value="AAP98255.1"/>
    <property type="molecule type" value="Genomic_DNA"/>
</dbReference>
<dbReference type="PIR" id="A86530">
    <property type="entry name" value="A86530"/>
</dbReference>
<dbReference type="PIR" id="B72093">
    <property type="entry name" value="B72093"/>
</dbReference>
<dbReference type="RefSeq" id="NP_224518.1">
    <property type="nucleotide sequence ID" value="NC_000922.1"/>
</dbReference>
<dbReference type="RefSeq" id="WP_010882961.1">
    <property type="nucleotide sequence ID" value="NZ_LN847257.1"/>
</dbReference>
<dbReference type="SMR" id="Q9Z8M5"/>
<dbReference type="STRING" id="406984.CPK_ORF00822"/>
<dbReference type="GeneID" id="45050362"/>
<dbReference type="KEGG" id="cpa:CP_0445"/>
<dbReference type="KEGG" id="cpj:acpS"/>
<dbReference type="KEGG" id="cpn:CPn_0313"/>
<dbReference type="KEGG" id="cpt:CpB0323"/>
<dbReference type="PATRIC" id="fig|115713.3.peg.347"/>
<dbReference type="eggNOG" id="COG0736">
    <property type="taxonomic scope" value="Bacteria"/>
</dbReference>
<dbReference type="HOGENOM" id="CLU_089696_0_2_0"/>
<dbReference type="OrthoDB" id="517356at2"/>
<dbReference type="Proteomes" id="UP000000583">
    <property type="component" value="Chromosome"/>
</dbReference>
<dbReference type="Proteomes" id="UP000000801">
    <property type="component" value="Chromosome"/>
</dbReference>
<dbReference type="GO" id="GO:0005737">
    <property type="term" value="C:cytoplasm"/>
    <property type="evidence" value="ECO:0007669"/>
    <property type="project" value="UniProtKB-SubCell"/>
</dbReference>
<dbReference type="GO" id="GO:0008897">
    <property type="term" value="F:holo-[acyl-carrier-protein] synthase activity"/>
    <property type="evidence" value="ECO:0007669"/>
    <property type="project" value="UniProtKB-UniRule"/>
</dbReference>
<dbReference type="GO" id="GO:0000287">
    <property type="term" value="F:magnesium ion binding"/>
    <property type="evidence" value="ECO:0007669"/>
    <property type="project" value="UniProtKB-UniRule"/>
</dbReference>
<dbReference type="GO" id="GO:0006633">
    <property type="term" value="P:fatty acid biosynthetic process"/>
    <property type="evidence" value="ECO:0007669"/>
    <property type="project" value="UniProtKB-UniRule"/>
</dbReference>
<dbReference type="Gene3D" id="3.90.470.20">
    <property type="entry name" value="4'-phosphopantetheinyl transferase domain"/>
    <property type="match status" value="1"/>
</dbReference>
<dbReference type="HAMAP" id="MF_00101">
    <property type="entry name" value="AcpS"/>
    <property type="match status" value="1"/>
</dbReference>
<dbReference type="InterPro" id="IPR008278">
    <property type="entry name" value="4-PPantetheinyl_Trfase_dom"/>
</dbReference>
<dbReference type="InterPro" id="IPR037143">
    <property type="entry name" value="4-PPantetheinyl_Trfase_dom_sf"/>
</dbReference>
<dbReference type="InterPro" id="IPR002582">
    <property type="entry name" value="ACPS"/>
</dbReference>
<dbReference type="InterPro" id="IPR004568">
    <property type="entry name" value="Ppantetheine-prot_Trfase_dom"/>
</dbReference>
<dbReference type="NCBIfam" id="TIGR00516">
    <property type="entry name" value="acpS"/>
    <property type="match status" value="1"/>
</dbReference>
<dbReference type="NCBIfam" id="TIGR00556">
    <property type="entry name" value="pantethn_trn"/>
    <property type="match status" value="1"/>
</dbReference>
<dbReference type="Pfam" id="PF01648">
    <property type="entry name" value="ACPS"/>
    <property type="match status" value="1"/>
</dbReference>
<dbReference type="SUPFAM" id="SSF56214">
    <property type="entry name" value="4'-phosphopantetheinyl transferase"/>
    <property type="match status" value="1"/>
</dbReference>
<accession>Q9Z8M5</accession>
<accession>Q9JQ96</accession>
<proteinExistence type="inferred from homology"/>
<feature type="chain" id="PRO_0000175632" description="Holo-[acyl-carrier-protein] synthase">
    <location>
        <begin position="1"/>
        <end position="122"/>
    </location>
</feature>
<feature type="binding site" evidence="1">
    <location>
        <position position="9"/>
    </location>
    <ligand>
        <name>Mg(2+)</name>
        <dbReference type="ChEBI" id="CHEBI:18420"/>
    </ligand>
</feature>
<feature type="binding site" evidence="1">
    <location>
        <position position="58"/>
    </location>
    <ligand>
        <name>Mg(2+)</name>
        <dbReference type="ChEBI" id="CHEBI:18420"/>
    </ligand>
</feature>
<sequence length="122" mass="13227">MEIIHIGTDIIEISRIREAIATHGNRLLNRIFTEAEQKYCLEKTDPIPSFAGRFAGKEAVAKALGTGIGSVVAWKDIEVFKVSHGPEVLLPSHVYAKIGISKVILSISHCKEYATATAIALA</sequence>
<name>ACPS_CHLPN</name>
<protein>
    <recommendedName>
        <fullName evidence="1">Holo-[acyl-carrier-protein] synthase</fullName>
        <shortName evidence="1">Holo-ACP synthase</shortName>
        <ecNumber evidence="1">2.7.8.7</ecNumber>
    </recommendedName>
    <alternativeName>
        <fullName evidence="1">4'-phosphopantetheinyl transferase AcpS</fullName>
    </alternativeName>
</protein>